<gene>
    <name type="primary">MT-CYB</name>
    <name type="synonym">COB</name>
    <name type="synonym">CYTB</name>
    <name type="synonym">MTCYB</name>
</gene>
<name>CYB_MORKA</name>
<geneLocation type="mitochondrion"/>
<evidence type="ECO:0000250" key="1"/>
<evidence type="ECO:0000250" key="2">
    <source>
        <dbReference type="UniProtKB" id="P00157"/>
    </source>
</evidence>
<evidence type="ECO:0000255" key="3">
    <source>
        <dbReference type="PROSITE-ProRule" id="PRU00968"/>
    </source>
</evidence>
<dbReference type="EMBL" id="L19725">
    <property type="protein sequence ID" value="AAA17770.1"/>
    <property type="molecule type" value="Genomic_DNA"/>
</dbReference>
<dbReference type="SMR" id="Q36291"/>
<dbReference type="GO" id="GO:0005743">
    <property type="term" value="C:mitochondrial inner membrane"/>
    <property type="evidence" value="ECO:0007669"/>
    <property type="project" value="UniProtKB-SubCell"/>
</dbReference>
<dbReference type="GO" id="GO:0046872">
    <property type="term" value="F:metal ion binding"/>
    <property type="evidence" value="ECO:0007669"/>
    <property type="project" value="UniProtKB-KW"/>
</dbReference>
<dbReference type="GO" id="GO:0008121">
    <property type="term" value="F:ubiquinol-cytochrome-c reductase activity"/>
    <property type="evidence" value="ECO:0007669"/>
    <property type="project" value="TreeGrafter"/>
</dbReference>
<dbReference type="GO" id="GO:0006122">
    <property type="term" value="P:mitochondrial electron transport, ubiquinol to cytochrome c"/>
    <property type="evidence" value="ECO:0007669"/>
    <property type="project" value="TreeGrafter"/>
</dbReference>
<dbReference type="CDD" id="cd00284">
    <property type="entry name" value="Cytochrome_b_N"/>
    <property type="match status" value="1"/>
</dbReference>
<dbReference type="Gene3D" id="1.20.810.10">
    <property type="entry name" value="Cytochrome Bc1 Complex, Chain C"/>
    <property type="match status" value="1"/>
</dbReference>
<dbReference type="InterPro" id="IPR005797">
    <property type="entry name" value="Cyt_b/b6_N"/>
</dbReference>
<dbReference type="InterPro" id="IPR027387">
    <property type="entry name" value="Cytb/b6-like_sf"/>
</dbReference>
<dbReference type="InterPro" id="IPR048259">
    <property type="entry name" value="Cytochrome_b_N_euk/bac"/>
</dbReference>
<dbReference type="InterPro" id="IPR016174">
    <property type="entry name" value="Di-haem_cyt_TM"/>
</dbReference>
<dbReference type="PANTHER" id="PTHR19271">
    <property type="entry name" value="CYTOCHROME B"/>
    <property type="match status" value="1"/>
</dbReference>
<dbReference type="PANTHER" id="PTHR19271:SF16">
    <property type="entry name" value="CYTOCHROME B"/>
    <property type="match status" value="1"/>
</dbReference>
<dbReference type="Pfam" id="PF00033">
    <property type="entry name" value="Cytochrome_B"/>
    <property type="match status" value="1"/>
</dbReference>
<dbReference type="SUPFAM" id="SSF81342">
    <property type="entry name" value="Transmembrane di-heme cytochromes"/>
    <property type="match status" value="1"/>
</dbReference>
<dbReference type="PROSITE" id="PS51002">
    <property type="entry name" value="CYTB_NTER"/>
    <property type="match status" value="1"/>
</dbReference>
<keyword id="KW-0249">Electron transport</keyword>
<keyword id="KW-0349">Heme</keyword>
<keyword id="KW-0408">Iron</keyword>
<keyword id="KW-0472">Membrane</keyword>
<keyword id="KW-0479">Metal-binding</keyword>
<keyword id="KW-0496">Mitochondrion</keyword>
<keyword id="KW-0999">Mitochondrion inner membrane</keyword>
<keyword id="KW-0679">Respiratory chain</keyword>
<keyword id="KW-0812">Transmembrane</keyword>
<keyword id="KW-1133">Transmembrane helix</keyword>
<keyword id="KW-0813">Transport</keyword>
<keyword id="KW-0830">Ubiquinone</keyword>
<sequence>MTNIRKSHPLIKIVNDAFIDLPAPSNISSWWNFGSLLGVCLTVQILTGLFLAMHYTSDTATAFNSVTHICRDVNYGWLLRYLHANGASMFFICLYLHVGRGLYYGSYTYTETWNVGVILLFAVMATAFMGYVLPWGQMSFWGATVITNLLSAIPYIGTDLVEWIWGGFSVDKATLT</sequence>
<comment type="function">
    <text evidence="2">Component of the ubiquinol-cytochrome c reductase complex (complex III or cytochrome b-c1 complex) that is part of the mitochondrial respiratory chain. The b-c1 complex mediates electron transfer from ubiquinol to cytochrome c. Contributes to the generation of a proton gradient across the mitochondrial membrane that is then used for ATP synthesis.</text>
</comment>
<comment type="cofactor">
    <cofactor evidence="2">
        <name>heme b</name>
        <dbReference type="ChEBI" id="CHEBI:60344"/>
    </cofactor>
    <text evidence="2">Binds 2 heme b groups non-covalently.</text>
</comment>
<comment type="subunit">
    <text evidence="2">The cytochrome bc1 complex contains 11 subunits: 3 respiratory subunits (MT-CYB, CYC1 and UQCRFS1), 2 core proteins (UQCRC1 and UQCRC2) and 6 low-molecular weight proteins (UQCRH/QCR6, UQCRB/QCR7, UQCRQ/QCR8, UQCR10/QCR9, UQCR11/QCR10 and a cleavage product of UQCRFS1). This cytochrome bc1 complex then forms a dimer.</text>
</comment>
<comment type="subcellular location">
    <subcellularLocation>
        <location evidence="2">Mitochondrion inner membrane</location>
        <topology evidence="2">Multi-pass membrane protein</topology>
    </subcellularLocation>
</comment>
<comment type="miscellaneous">
    <text evidence="1">Heme 1 (or BL or b562) is low-potential and absorbs at about 562 nm, and heme 2 (or BH or b566) is high-potential and absorbs at about 566 nm.</text>
</comment>
<comment type="similarity">
    <text evidence="3">Belongs to the cytochrome b family.</text>
</comment>
<comment type="caution">
    <text evidence="2">The full-length protein contains only eight transmembrane helices, not nine as predicted by bioinformatics tools.</text>
</comment>
<proteinExistence type="inferred from homology"/>
<accession>Q36291</accession>
<reference key="1">
    <citation type="journal article" date="1994" name="J. Mammal.">
        <title>Familial affinity of Tomopeas ravus (Chiroptera) based on protein electrophoretic and cytochrome b sequence data.</title>
        <authorList>
            <person name="Sudman P.D."/>
            <person name="Barkley L.J."/>
            <person name="Hafner M.S."/>
        </authorList>
    </citation>
    <scope>NUCLEOTIDE SEQUENCE [GENOMIC DNA]</scope>
    <source>
        <strain>Isolate LSUMZ 25057</strain>
        <tissue>Kidney</tissue>
        <tissue>Liver</tissue>
    </source>
</reference>
<feature type="chain" id="PRO_0000061206" description="Cytochrome b">
    <location>
        <begin position="1"/>
        <end position="176" status="greater than"/>
    </location>
</feature>
<feature type="transmembrane region" description="Helical" evidence="2">
    <location>
        <begin position="33"/>
        <end position="53"/>
    </location>
</feature>
<feature type="transmembrane region" description="Helical" evidence="2">
    <location>
        <begin position="77"/>
        <end position="98"/>
    </location>
</feature>
<feature type="transmembrane region" description="Helical" evidence="2">
    <location>
        <begin position="113"/>
        <end position="133"/>
    </location>
</feature>
<feature type="binding site" description="axial binding residue" evidence="2">
    <location>
        <position position="83"/>
    </location>
    <ligand>
        <name>heme b</name>
        <dbReference type="ChEBI" id="CHEBI:60344"/>
        <label>b562</label>
    </ligand>
    <ligandPart>
        <name>Fe</name>
        <dbReference type="ChEBI" id="CHEBI:18248"/>
    </ligandPart>
</feature>
<feature type="binding site" description="axial binding residue" evidence="2">
    <location>
        <position position="97"/>
    </location>
    <ligand>
        <name>heme b</name>
        <dbReference type="ChEBI" id="CHEBI:60344"/>
        <label>b566</label>
    </ligand>
    <ligandPart>
        <name>Fe</name>
        <dbReference type="ChEBI" id="CHEBI:18248"/>
    </ligandPart>
</feature>
<feature type="non-terminal residue">
    <location>
        <position position="176"/>
    </location>
</feature>
<organism>
    <name type="scientific">Mormopterus kalinowskii</name>
    <name type="common">Kalinowski's mastiff bat</name>
    <name type="synonym">Nyctinomus kalinowskii</name>
    <dbReference type="NCBI Taxonomy" id="27624"/>
    <lineage>
        <taxon>Eukaryota</taxon>
        <taxon>Metazoa</taxon>
        <taxon>Chordata</taxon>
        <taxon>Craniata</taxon>
        <taxon>Vertebrata</taxon>
        <taxon>Euteleostomi</taxon>
        <taxon>Mammalia</taxon>
        <taxon>Eutheria</taxon>
        <taxon>Laurasiatheria</taxon>
        <taxon>Chiroptera</taxon>
        <taxon>Yangochiroptera</taxon>
        <taxon>Molossidae</taxon>
        <taxon>Mormopterus</taxon>
    </lineage>
</organism>
<protein>
    <recommendedName>
        <fullName>Cytochrome b</fullName>
    </recommendedName>
    <alternativeName>
        <fullName>Complex III subunit 3</fullName>
    </alternativeName>
    <alternativeName>
        <fullName>Complex III subunit III</fullName>
    </alternativeName>
    <alternativeName>
        <fullName>Cytochrome b-c1 complex subunit 3</fullName>
    </alternativeName>
    <alternativeName>
        <fullName>Ubiquinol-cytochrome-c reductase complex cytochrome b subunit</fullName>
    </alternativeName>
</protein>